<name>PPE61_MYCTU</name>
<dbReference type="EMBL" id="AL123456">
    <property type="protein sequence ID" value="CCP46354.1"/>
    <property type="molecule type" value="Genomic_DNA"/>
</dbReference>
<dbReference type="PIR" id="E70675">
    <property type="entry name" value="E70675"/>
</dbReference>
<dbReference type="RefSeq" id="WP_003419226.1">
    <property type="nucleotide sequence ID" value="NZ_NVQJ01000014.1"/>
</dbReference>
<dbReference type="RefSeq" id="YP_177984.1">
    <property type="nucleotide sequence ID" value="NC_000962.3"/>
</dbReference>
<dbReference type="SMR" id="P9WHX9"/>
<dbReference type="PaxDb" id="83332-Rv3532"/>
<dbReference type="DNASU" id="888370"/>
<dbReference type="GeneID" id="888370"/>
<dbReference type="KEGG" id="mtu:Rv3532"/>
<dbReference type="KEGG" id="mtv:RVBD_3532"/>
<dbReference type="TubercuList" id="Rv3532"/>
<dbReference type="eggNOG" id="COG5651">
    <property type="taxonomic scope" value="Bacteria"/>
</dbReference>
<dbReference type="InParanoid" id="P9WHX9"/>
<dbReference type="OrthoDB" id="4680519at2"/>
<dbReference type="PhylomeDB" id="P9WHX9"/>
<dbReference type="Proteomes" id="UP000001584">
    <property type="component" value="Chromosome"/>
</dbReference>
<dbReference type="GO" id="GO:0052572">
    <property type="term" value="P:response to host immune response"/>
    <property type="evidence" value="ECO:0000318"/>
    <property type="project" value="GO_Central"/>
</dbReference>
<dbReference type="FunFam" id="1.20.1260.20:FF:000001">
    <property type="entry name" value="PPE family protein PPE41"/>
    <property type="match status" value="1"/>
</dbReference>
<dbReference type="Gene3D" id="1.20.1260.20">
    <property type="entry name" value="PPE superfamily"/>
    <property type="match status" value="1"/>
</dbReference>
<dbReference type="InterPro" id="IPR022171">
    <property type="entry name" value="PPE_C"/>
</dbReference>
<dbReference type="InterPro" id="IPR000030">
    <property type="entry name" value="PPE_dom"/>
</dbReference>
<dbReference type="InterPro" id="IPR038332">
    <property type="entry name" value="PPE_sf"/>
</dbReference>
<dbReference type="PANTHER" id="PTHR46766">
    <property type="entry name" value="GLUTAMINE-RICH PROTEIN 2"/>
    <property type="match status" value="1"/>
</dbReference>
<dbReference type="PANTHER" id="PTHR46766:SF1">
    <property type="entry name" value="GLUTAMINE-RICH PROTEIN 2"/>
    <property type="match status" value="1"/>
</dbReference>
<dbReference type="Pfam" id="PF00823">
    <property type="entry name" value="PPE"/>
    <property type="match status" value="1"/>
</dbReference>
<dbReference type="Pfam" id="PF12484">
    <property type="entry name" value="PPE-SVP"/>
    <property type="match status" value="1"/>
</dbReference>
<dbReference type="SUPFAM" id="SSF140459">
    <property type="entry name" value="PE/PPE dimer-like"/>
    <property type="match status" value="1"/>
</dbReference>
<feature type="chain" id="PRO_0000379591" description="Uncharacterized PPE family protein PPE61">
    <location>
        <begin position="1"/>
        <end position="406"/>
    </location>
</feature>
<accession>P9WHX9</accession>
<accession>L0TD06</accession>
<accession>Q6MWW4</accession>
<gene>
    <name type="primary">PPE61</name>
    <name type="ordered locus">Rv3532</name>
</gene>
<sequence length="406" mass="41549">MFMDFAMLPPEVNSTRMYSGPGAGSLWAAAAAWDQVSAELQSAAETYRSVIASLTGWQWLGPSSVRMGAAVTPYVEWLTTTAAQARQTATQITAAATGFEQAFAMTVPPPAIMANRAQVLSLIATNFFGQNTAAIAALETQYAEMWEQDATAMYDYAATSAAARTLTPFTSPQQDTNSAGLPAQSAEVSRATANAGAADGNWLGNLLEEIGILLLPIAPELTPFFLEAGEIVNAIPFPSIVGDEFCLLDGLLAWYATIGSINNINSMGTGIIGAEKNLGILPELGSAAAAAAPPPADIAPAFLAPLTSMAKSLSDGALRGPGEVSAAMRGAGTIGQMSVPPAWKAPAVTTVRAFDATPMTTLPGGDAPAAGVPGLPGMPASGAGRAGVVPRYGVRLTVMTRPLSGG</sequence>
<organism>
    <name type="scientific">Mycobacterium tuberculosis (strain ATCC 25618 / H37Rv)</name>
    <dbReference type="NCBI Taxonomy" id="83332"/>
    <lineage>
        <taxon>Bacteria</taxon>
        <taxon>Bacillati</taxon>
        <taxon>Actinomycetota</taxon>
        <taxon>Actinomycetes</taxon>
        <taxon>Mycobacteriales</taxon>
        <taxon>Mycobacteriaceae</taxon>
        <taxon>Mycobacterium</taxon>
        <taxon>Mycobacterium tuberculosis complex</taxon>
    </lineage>
</organism>
<keyword id="KW-1185">Reference proteome</keyword>
<reference key="1">
    <citation type="journal article" date="1998" name="Nature">
        <title>Deciphering the biology of Mycobacterium tuberculosis from the complete genome sequence.</title>
        <authorList>
            <person name="Cole S.T."/>
            <person name="Brosch R."/>
            <person name="Parkhill J."/>
            <person name="Garnier T."/>
            <person name="Churcher C.M."/>
            <person name="Harris D.E."/>
            <person name="Gordon S.V."/>
            <person name="Eiglmeier K."/>
            <person name="Gas S."/>
            <person name="Barry C.E. III"/>
            <person name="Tekaia F."/>
            <person name="Badcock K."/>
            <person name="Basham D."/>
            <person name="Brown D."/>
            <person name="Chillingworth T."/>
            <person name="Connor R."/>
            <person name="Davies R.M."/>
            <person name="Devlin K."/>
            <person name="Feltwell T."/>
            <person name="Gentles S."/>
            <person name="Hamlin N."/>
            <person name="Holroyd S."/>
            <person name="Hornsby T."/>
            <person name="Jagels K."/>
            <person name="Krogh A."/>
            <person name="McLean J."/>
            <person name="Moule S."/>
            <person name="Murphy L.D."/>
            <person name="Oliver S."/>
            <person name="Osborne J."/>
            <person name="Quail M.A."/>
            <person name="Rajandream M.A."/>
            <person name="Rogers J."/>
            <person name="Rutter S."/>
            <person name="Seeger K."/>
            <person name="Skelton S."/>
            <person name="Squares S."/>
            <person name="Squares R."/>
            <person name="Sulston J.E."/>
            <person name="Taylor K."/>
            <person name="Whitehead S."/>
            <person name="Barrell B.G."/>
        </authorList>
    </citation>
    <scope>NUCLEOTIDE SEQUENCE [LARGE SCALE GENOMIC DNA]</scope>
    <source>
        <strain>ATCC 25618 / H37Rv</strain>
    </source>
</reference>
<protein>
    <recommendedName>
        <fullName>Uncharacterized PPE family protein PPE61</fullName>
    </recommendedName>
</protein>
<evidence type="ECO:0000305" key="1"/>
<comment type="similarity">
    <text evidence="1">Belongs to the mycobacterial PPE family.</text>
</comment>
<proteinExistence type="inferred from homology"/>